<dbReference type="EC" id="5.3.1.9" evidence="1"/>
<dbReference type="EMBL" id="CR378673">
    <property type="protein sequence ID" value="CAG21626.1"/>
    <property type="molecule type" value="Genomic_DNA"/>
</dbReference>
<dbReference type="RefSeq" id="WP_011219874.1">
    <property type="nucleotide sequence ID" value="NC_006370.1"/>
</dbReference>
<dbReference type="SMR" id="Q6LM51"/>
<dbReference type="STRING" id="298386.PBPRA3328"/>
<dbReference type="KEGG" id="ppr:PBPRA3328"/>
<dbReference type="eggNOG" id="COG0166">
    <property type="taxonomic scope" value="Bacteria"/>
</dbReference>
<dbReference type="HOGENOM" id="CLU_017947_3_1_6"/>
<dbReference type="UniPathway" id="UPA00109">
    <property type="reaction ID" value="UER00181"/>
</dbReference>
<dbReference type="UniPathway" id="UPA00138"/>
<dbReference type="Proteomes" id="UP000000593">
    <property type="component" value="Chromosome 1"/>
</dbReference>
<dbReference type="GO" id="GO:0005829">
    <property type="term" value="C:cytosol"/>
    <property type="evidence" value="ECO:0007669"/>
    <property type="project" value="TreeGrafter"/>
</dbReference>
<dbReference type="GO" id="GO:0097367">
    <property type="term" value="F:carbohydrate derivative binding"/>
    <property type="evidence" value="ECO:0007669"/>
    <property type="project" value="InterPro"/>
</dbReference>
<dbReference type="GO" id="GO:0004347">
    <property type="term" value="F:glucose-6-phosphate isomerase activity"/>
    <property type="evidence" value="ECO:0007669"/>
    <property type="project" value="UniProtKB-UniRule"/>
</dbReference>
<dbReference type="GO" id="GO:0048029">
    <property type="term" value="F:monosaccharide binding"/>
    <property type="evidence" value="ECO:0007669"/>
    <property type="project" value="TreeGrafter"/>
</dbReference>
<dbReference type="GO" id="GO:0006094">
    <property type="term" value="P:gluconeogenesis"/>
    <property type="evidence" value="ECO:0007669"/>
    <property type="project" value="UniProtKB-UniRule"/>
</dbReference>
<dbReference type="GO" id="GO:0051156">
    <property type="term" value="P:glucose 6-phosphate metabolic process"/>
    <property type="evidence" value="ECO:0007669"/>
    <property type="project" value="TreeGrafter"/>
</dbReference>
<dbReference type="GO" id="GO:0006096">
    <property type="term" value="P:glycolytic process"/>
    <property type="evidence" value="ECO:0007669"/>
    <property type="project" value="UniProtKB-UniRule"/>
</dbReference>
<dbReference type="CDD" id="cd05015">
    <property type="entry name" value="SIS_PGI_1"/>
    <property type="match status" value="1"/>
</dbReference>
<dbReference type="CDD" id="cd05016">
    <property type="entry name" value="SIS_PGI_2"/>
    <property type="match status" value="1"/>
</dbReference>
<dbReference type="FunFam" id="1.10.1390.10:FF:000001">
    <property type="entry name" value="Glucose-6-phosphate isomerase"/>
    <property type="match status" value="1"/>
</dbReference>
<dbReference type="FunFam" id="3.40.50.10490:FF:000004">
    <property type="entry name" value="Glucose-6-phosphate isomerase"/>
    <property type="match status" value="1"/>
</dbReference>
<dbReference type="Gene3D" id="1.10.1390.10">
    <property type="match status" value="1"/>
</dbReference>
<dbReference type="Gene3D" id="3.40.50.10490">
    <property type="entry name" value="Glucose-6-phosphate isomerase like protein, domain 1"/>
    <property type="match status" value="2"/>
</dbReference>
<dbReference type="HAMAP" id="MF_00473">
    <property type="entry name" value="G6P_isomerase"/>
    <property type="match status" value="1"/>
</dbReference>
<dbReference type="InterPro" id="IPR001672">
    <property type="entry name" value="G6P_Isomerase"/>
</dbReference>
<dbReference type="InterPro" id="IPR023096">
    <property type="entry name" value="G6P_Isomerase_C"/>
</dbReference>
<dbReference type="InterPro" id="IPR018189">
    <property type="entry name" value="Phosphoglucose_isomerase_CS"/>
</dbReference>
<dbReference type="InterPro" id="IPR046348">
    <property type="entry name" value="SIS_dom_sf"/>
</dbReference>
<dbReference type="InterPro" id="IPR035476">
    <property type="entry name" value="SIS_PGI_1"/>
</dbReference>
<dbReference type="InterPro" id="IPR035482">
    <property type="entry name" value="SIS_PGI_2"/>
</dbReference>
<dbReference type="NCBIfam" id="NF001211">
    <property type="entry name" value="PRK00179.1"/>
    <property type="match status" value="1"/>
</dbReference>
<dbReference type="PANTHER" id="PTHR11469">
    <property type="entry name" value="GLUCOSE-6-PHOSPHATE ISOMERASE"/>
    <property type="match status" value="1"/>
</dbReference>
<dbReference type="PANTHER" id="PTHR11469:SF1">
    <property type="entry name" value="GLUCOSE-6-PHOSPHATE ISOMERASE"/>
    <property type="match status" value="1"/>
</dbReference>
<dbReference type="Pfam" id="PF00342">
    <property type="entry name" value="PGI"/>
    <property type="match status" value="1"/>
</dbReference>
<dbReference type="PRINTS" id="PR00662">
    <property type="entry name" value="G6PISOMERASE"/>
</dbReference>
<dbReference type="SUPFAM" id="SSF53697">
    <property type="entry name" value="SIS domain"/>
    <property type="match status" value="1"/>
</dbReference>
<dbReference type="PROSITE" id="PS00765">
    <property type="entry name" value="P_GLUCOSE_ISOMERASE_1"/>
    <property type="match status" value="1"/>
</dbReference>
<dbReference type="PROSITE" id="PS00174">
    <property type="entry name" value="P_GLUCOSE_ISOMERASE_2"/>
    <property type="match status" value="1"/>
</dbReference>
<dbReference type="PROSITE" id="PS51463">
    <property type="entry name" value="P_GLUCOSE_ISOMERASE_3"/>
    <property type="match status" value="1"/>
</dbReference>
<protein>
    <recommendedName>
        <fullName evidence="1">Glucose-6-phosphate isomerase</fullName>
        <shortName evidence="1">GPI</shortName>
        <ecNumber evidence="1">5.3.1.9</ecNumber>
    </recommendedName>
    <alternativeName>
        <fullName evidence="1">Phosphoglucose isomerase</fullName>
        <shortName evidence="1">PGI</shortName>
    </alternativeName>
    <alternativeName>
        <fullName evidence="1">Phosphohexose isomerase</fullName>
        <shortName evidence="1">PHI</shortName>
    </alternativeName>
</protein>
<evidence type="ECO:0000255" key="1">
    <source>
        <dbReference type="HAMAP-Rule" id="MF_00473"/>
    </source>
</evidence>
<accession>Q6LM51</accession>
<name>G6PI_PHOPR</name>
<reference key="1">
    <citation type="journal article" date="2005" name="Science">
        <title>Life at depth: Photobacterium profundum genome sequence and expression analysis.</title>
        <authorList>
            <person name="Vezzi A."/>
            <person name="Campanaro S."/>
            <person name="D'Angelo M."/>
            <person name="Simonato F."/>
            <person name="Vitulo N."/>
            <person name="Lauro F.M."/>
            <person name="Cestaro A."/>
            <person name="Malacrida G."/>
            <person name="Simionati B."/>
            <person name="Cannata N."/>
            <person name="Romualdi C."/>
            <person name="Bartlett D.H."/>
            <person name="Valle G."/>
        </authorList>
    </citation>
    <scope>NUCLEOTIDE SEQUENCE [LARGE SCALE GENOMIC DNA]</scope>
    <source>
        <strain>ATCC BAA-1253 / SS9</strain>
    </source>
</reference>
<organism>
    <name type="scientific">Photobacterium profundum (strain SS9)</name>
    <dbReference type="NCBI Taxonomy" id="298386"/>
    <lineage>
        <taxon>Bacteria</taxon>
        <taxon>Pseudomonadati</taxon>
        <taxon>Pseudomonadota</taxon>
        <taxon>Gammaproteobacteria</taxon>
        <taxon>Vibrionales</taxon>
        <taxon>Vibrionaceae</taxon>
        <taxon>Photobacterium</taxon>
    </lineage>
</organism>
<gene>
    <name evidence="1" type="primary">pgi</name>
    <name type="ordered locus">PBPRA3328</name>
</gene>
<proteinExistence type="inferred from homology"/>
<comment type="function">
    <text evidence="1">Catalyzes the reversible isomerization of glucose-6-phosphate to fructose-6-phosphate.</text>
</comment>
<comment type="catalytic activity">
    <reaction evidence="1">
        <text>alpha-D-glucose 6-phosphate = beta-D-fructose 6-phosphate</text>
        <dbReference type="Rhea" id="RHEA:11816"/>
        <dbReference type="ChEBI" id="CHEBI:57634"/>
        <dbReference type="ChEBI" id="CHEBI:58225"/>
        <dbReference type="EC" id="5.3.1.9"/>
    </reaction>
</comment>
<comment type="pathway">
    <text evidence="1">Carbohydrate biosynthesis; gluconeogenesis.</text>
</comment>
<comment type="pathway">
    <text evidence="1">Carbohydrate degradation; glycolysis; D-glyceraldehyde 3-phosphate and glycerone phosphate from D-glucose: step 2/4.</text>
</comment>
<comment type="subcellular location">
    <subcellularLocation>
        <location evidence="1">Cytoplasm</location>
    </subcellularLocation>
</comment>
<comment type="similarity">
    <text evidence="1">Belongs to the GPI family.</text>
</comment>
<keyword id="KW-0963">Cytoplasm</keyword>
<keyword id="KW-0312">Gluconeogenesis</keyword>
<keyword id="KW-0324">Glycolysis</keyword>
<keyword id="KW-0413">Isomerase</keyword>
<keyword id="KW-1185">Reference proteome</keyword>
<feature type="chain" id="PRO_0000180701" description="Glucose-6-phosphate isomerase">
    <location>
        <begin position="1"/>
        <end position="550"/>
    </location>
</feature>
<feature type="active site" description="Proton donor" evidence="1">
    <location>
        <position position="356"/>
    </location>
</feature>
<feature type="active site" evidence="1">
    <location>
        <position position="387"/>
    </location>
</feature>
<feature type="active site" evidence="1">
    <location>
        <position position="515"/>
    </location>
</feature>
<sequence length="550" mass="61190">MLKNINPTHTQAWKDLTAHYEDAQDLQLSDLFANDSERFNKFSATFGSDILLDYSKNLITEETLTKLFALAEQTELKAAIAEMFSGEKINKTEDRAVLHSALRNRSNTPVVVDGEDVMPKVNAVLEKMKAFTARIVDGDWKGYTGQEITDVVNVGIGGSDLGPYMVSEALVPYKTRLNMHFVSNVDGTHIAETLKDLNPETTLFLIASKTFTTQETMTNAHSARDWFLATAQDQAHVAKHFAALSTNVGSVSEFGIDTDNMFEFWDWVGGRYSLCSAIGLSICLSIGFDNFVELLDGAHEMDQHFAQAPLEENLPVILALIGIWYNNFHGAESEAILPYDQYLHRFAAYFQQGNMESNGKCVDRGGNPVDYQTGPIIWGEPGTNGQHAFYQLIHQGTKLIPCDFIAPSISHNPLTDHHPKLMANFFAQTEALAFGKTKEQVEAEFVAAGKTLDEVKDLVPFKVFDGNRPTNSILIKQVTPKVLGSLMALYEQKIFTQGVIWNIFSFDQWGVELGKQLANQILPELNDADSIAGHDSSTNGLINAYKQWRK</sequence>